<protein>
    <recommendedName>
        <fullName>N-alpha-acetyltransferase 15, NatA auxiliary subunit</fullName>
    </recommendedName>
    <alternativeName>
        <fullName>NMDA receptor-regulated protein 1</fullName>
    </alternativeName>
</protein>
<sequence>MPAVSLPPKENALFKRILRCYEHKQYRNGLKFCKQILSNPKFAEHGETLAMKGLTLNCLGKKEEAYELVRRGLRNDLKSHVCWHVYGLLQRSDKKYDEAIKCYRNALKWDKDNLQILRDLSLLQIQMRDLEGYRETRYQLLQLRPAQRASWIGYAIAYHLLEDYEMAAKILEEFRKTQQTSPDKVDYEYSELLLYQNQVLREAGLYREALEHLCTYEKQICDKLAVEETKGELLLQLCRLEDAADVYRGLQERNPENWAYYKGLEKALKPANMLERLKIYEEAWTKYPRGLVPRRLPLNFLSGEKFKECLDKFLRMNFSKGCPPVFNTLRSLYKDKEKVAIIEELVVGYETSLKSCRLFNPNDDGKEEPPTTLLWVQYYLAQHYDKIGQPSIALEYINTAIESTPTLIELFLVKAKIYKHAGNIKEAARWMDEAQALDTADRFINSKCAKYMLKANLIKEAEEMCSKFTREGTSAVENLNEMQCMWFQTECAQAYKAMNKFGEALKKCYEIERHFIEITDDQFDFHTYCMRKITLRSYVDLLKLEDVLRQHPFYFKAARIAIEIYLKLHDNPLTDENKEHEADTANMSDKELKKLRNKQRRAQKKAQIEEEKKNAEKEKQQRNQKKKKDDDDEEIGGPKEELIPEKLAKVETPLEEAIKFLTPLKNLVKNKIETHLFAFEIYFRKEKFLLMLQSVKRAFAIDSSHPWLHECMIRLFNTAVCESKDLSDTVRTVLKQEMHRLFGATNPKNFNETFLKRNSDSLPHRLSAAKMVYYLDPSSQKRAIELATTLDESLTNRNLQTCMEVLETLYDGSLGDCKEAAEIYRANCHKLFPYALAFMPPGYEEDMKITVNGDSSAEAEELANEI</sequence>
<organism>
    <name type="scientific">Pongo abelii</name>
    <name type="common">Sumatran orangutan</name>
    <name type="synonym">Pongo pygmaeus abelii</name>
    <dbReference type="NCBI Taxonomy" id="9601"/>
    <lineage>
        <taxon>Eukaryota</taxon>
        <taxon>Metazoa</taxon>
        <taxon>Chordata</taxon>
        <taxon>Craniata</taxon>
        <taxon>Vertebrata</taxon>
        <taxon>Euteleostomi</taxon>
        <taxon>Mammalia</taxon>
        <taxon>Eutheria</taxon>
        <taxon>Euarchontoglires</taxon>
        <taxon>Primates</taxon>
        <taxon>Haplorrhini</taxon>
        <taxon>Catarrhini</taxon>
        <taxon>Hominidae</taxon>
        <taxon>Pongo</taxon>
    </lineage>
</organism>
<dbReference type="EMBL" id="CR861248">
    <property type="protein sequence ID" value="CAH93317.1"/>
    <property type="molecule type" value="mRNA"/>
</dbReference>
<dbReference type="RefSeq" id="NP_001126952.1">
    <property type="nucleotide sequence ID" value="NM_001133480.1"/>
</dbReference>
<dbReference type="SMR" id="Q5R4J9"/>
<dbReference type="FunCoup" id="Q5R4J9">
    <property type="interactions" value="4286"/>
</dbReference>
<dbReference type="STRING" id="9601.ENSPPYP00000016837"/>
<dbReference type="GeneID" id="100173970"/>
<dbReference type="KEGG" id="pon:100173970"/>
<dbReference type="CTD" id="80155"/>
<dbReference type="eggNOG" id="KOG1156">
    <property type="taxonomic scope" value="Eukaryota"/>
</dbReference>
<dbReference type="InParanoid" id="Q5R4J9"/>
<dbReference type="OrthoDB" id="10263032at2759"/>
<dbReference type="Proteomes" id="UP000001595">
    <property type="component" value="Unplaced"/>
</dbReference>
<dbReference type="GO" id="GO:0031415">
    <property type="term" value="C:NatA complex"/>
    <property type="evidence" value="ECO:0007669"/>
    <property type="project" value="TreeGrafter"/>
</dbReference>
<dbReference type="GO" id="GO:0005634">
    <property type="term" value="C:nucleus"/>
    <property type="evidence" value="ECO:0007669"/>
    <property type="project" value="UniProtKB-SubCell"/>
</dbReference>
<dbReference type="FunFam" id="1.25.40.1010:FF:000001">
    <property type="entry name" value="N-alpha-acetyltransferase 15, NatA auxiliary subunit"/>
    <property type="match status" value="1"/>
</dbReference>
<dbReference type="FunFam" id="1.25.40.1040:FF:000001">
    <property type="entry name" value="N-alpha-acetyltransferase 15, NatA auxiliary subunit"/>
    <property type="match status" value="1"/>
</dbReference>
<dbReference type="Gene3D" id="1.25.40.1010">
    <property type="match status" value="1"/>
</dbReference>
<dbReference type="Gene3D" id="1.25.40.1040">
    <property type="match status" value="1"/>
</dbReference>
<dbReference type="InterPro" id="IPR021183">
    <property type="entry name" value="NatA_aux_su"/>
</dbReference>
<dbReference type="InterPro" id="IPR011990">
    <property type="entry name" value="TPR-like_helical_dom_sf"/>
</dbReference>
<dbReference type="InterPro" id="IPR019734">
    <property type="entry name" value="TPR_rpt"/>
</dbReference>
<dbReference type="PANTHER" id="PTHR22767:SF6">
    <property type="entry name" value="N-ALPHA-ACETYLTRANSFERASE 15, NATA AUXILIARY SUBUNIT"/>
    <property type="match status" value="1"/>
</dbReference>
<dbReference type="PANTHER" id="PTHR22767">
    <property type="entry name" value="N-TERMINAL ACETYLTRANSFERASE-RELATED"/>
    <property type="match status" value="1"/>
</dbReference>
<dbReference type="Pfam" id="PF12569">
    <property type="entry name" value="NatA_aux_su"/>
    <property type="match status" value="1"/>
</dbReference>
<dbReference type="Pfam" id="PF13181">
    <property type="entry name" value="TPR_8"/>
    <property type="match status" value="1"/>
</dbReference>
<dbReference type="PIRSF" id="PIRSF000422">
    <property type="entry name" value="N-terminal-AcTrfase-A_aux_su"/>
    <property type="match status" value="1"/>
</dbReference>
<dbReference type="SMART" id="SM00028">
    <property type="entry name" value="TPR"/>
    <property type="match status" value="5"/>
</dbReference>
<dbReference type="SUPFAM" id="SSF48452">
    <property type="entry name" value="TPR-like"/>
    <property type="match status" value="1"/>
</dbReference>
<dbReference type="PROSITE" id="PS50005">
    <property type="entry name" value="TPR"/>
    <property type="match status" value="5"/>
</dbReference>
<dbReference type="PROSITE" id="PS50293">
    <property type="entry name" value="TPR_REGION"/>
    <property type="match status" value="2"/>
</dbReference>
<feature type="chain" id="PRO_0000106296" description="N-alpha-acetyltransferase 15, NatA auxiliary subunit">
    <location>
        <begin position="1"/>
        <end position="866"/>
    </location>
</feature>
<feature type="repeat" description="TPR 1">
    <location>
        <begin position="46"/>
        <end position="79"/>
    </location>
</feature>
<feature type="repeat" description="TPR 2">
    <location>
        <begin position="80"/>
        <end position="113"/>
    </location>
</feature>
<feature type="repeat" description="TPR 3">
    <location>
        <begin position="148"/>
        <end position="184"/>
    </location>
</feature>
<feature type="repeat" description="TPR 4">
    <location>
        <begin position="224"/>
        <end position="257"/>
    </location>
</feature>
<feature type="repeat" description="TPR 5">
    <location>
        <begin position="374"/>
        <end position="407"/>
    </location>
</feature>
<feature type="repeat" description="TPR 6">
    <location>
        <begin position="409"/>
        <end position="441"/>
    </location>
</feature>
<feature type="repeat" description="TPR 7">
    <location>
        <begin position="485"/>
        <end position="522"/>
    </location>
</feature>
<feature type="repeat" description="TPR 8">
    <location>
        <begin position="672"/>
        <end position="705"/>
    </location>
</feature>
<feature type="region of interest" description="Interaction with HYPK" evidence="1">
    <location>
        <begin position="500"/>
        <end position="866"/>
    </location>
</feature>
<feature type="region of interest" description="Disordered" evidence="3">
    <location>
        <begin position="579"/>
        <end position="642"/>
    </location>
</feature>
<feature type="compositionally biased region" description="Basic and acidic residues" evidence="3">
    <location>
        <begin position="579"/>
        <end position="594"/>
    </location>
</feature>
<feature type="compositionally biased region" description="Basic residues" evidence="3">
    <location>
        <begin position="595"/>
        <end position="604"/>
    </location>
</feature>
<feature type="compositionally biased region" description="Basic and acidic residues" evidence="3">
    <location>
        <begin position="606"/>
        <end position="621"/>
    </location>
</feature>
<feature type="modified residue" description="N6-acetyllysine" evidence="2">
    <location>
        <position position="262"/>
    </location>
</feature>
<feature type="modified residue" description="Phosphoserine" evidence="2">
    <location>
        <position position="302"/>
    </location>
</feature>
<feature type="modified residue" description="Phosphoserine" evidence="2">
    <location>
        <position position="537"/>
    </location>
</feature>
<feature type="modified residue" description="Phosphoserine" evidence="2">
    <location>
        <position position="588"/>
    </location>
</feature>
<feature type="modified residue" description="N6-acetyllysine" evidence="2">
    <location>
        <position position="735"/>
    </location>
</feature>
<feature type="modified residue" description="N6-acetyllysine" evidence="2">
    <location>
        <position position="756"/>
    </location>
</feature>
<feature type="modified residue" description="Phosphoserine" evidence="2">
    <location>
        <position position="855"/>
    </location>
</feature>
<feature type="modified residue" description="Phosphoserine" evidence="2">
    <location>
        <position position="856"/>
    </location>
</feature>
<name>NAA15_PONAB</name>
<gene>
    <name type="primary">NAA15</name>
    <name type="synonym">NARG1</name>
</gene>
<accession>Q5R4J9</accession>
<keyword id="KW-0007">Acetylation</keyword>
<keyword id="KW-0963">Cytoplasm</keyword>
<keyword id="KW-0539">Nucleus</keyword>
<keyword id="KW-0597">Phosphoprotein</keyword>
<keyword id="KW-1185">Reference proteome</keyword>
<keyword id="KW-0677">Repeat</keyword>
<keyword id="KW-0802">TPR repeat</keyword>
<proteinExistence type="evidence at transcript level"/>
<evidence type="ECO:0000250" key="1"/>
<evidence type="ECO:0000250" key="2">
    <source>
        <dbReference type="UniProtKB" id="Q9BXJ9"/>
    </source>
</evidence>
<evidence type="ECO:0000256" key="3">
    <source>
        <dbReference type="SAM" id="MobiDB-lite"/>
    </source>
</evidence>
<reference key="1">
    <citation type="submission" date="2004-11" db="EMBL/GenBank/DDBJ databases">
        <authorList>
            <consortium name="The German cDNA consortium"/>
        </authorList>
    </citation>
    <scope>NUCLEOTIDE SEQUENCE [LARGE SCALE MRNA]</scope>
    <source>
        <tissue>Brain cortex</tissue>
    </source>
</reference>
<comment type="function">
    <text evidence="1">Auxillary subunit of the N-terminal acetyltransferase A (NatA) complex which displays alpha (N-terminal) acetyltransferase activity. The NAT activity may be important for vascular, hematopoietic and neuronal growth and development. Required to control retinal neovascularization in adult ocular endothelial cells. In complex with XRCC6 and XRCC5 (Ku80), up-regulates transcription from the osteocalcin promoter (By similarity).</text>
</comment>
<comment type="subunit">
    <text evidence="2">Component of the N-terminal acetyltransferase A (NatA) complex composed of NAA10 or probably NAA11 and NAA15 (By similarity). Interacts with XRCC6, NAA50 and XRCC5 (By similarity). Associates with HYPK when in a complex with NAA10 (By similarity). Interaction with HYPK reduces the capacity to interact with NAA50 (By similarity).</text>
</comment>
<comment type="subcellular location">
    <subcellularLocation>
        <location evidence="1">Cytoplasm</location>
    </subcellularLocation>
    <subcellularLocation>
        <location evidence="1">Nucleus</location>
    </subcellularLocation>
    <text evidence="1">Mainly cytoplasmic, nuclear in some cases.</text>
</comment>
<comment type="PTM">
    <text evidence="1">Cleaved by caspases during apoptosis.</text>
</comment>